<protein>
    <recommendedName>
        <fullName evidence="1">Exodeoxyribonuclease 7 large subunit</fullName>
        <ecNumber evidence="1">3.1.11.6</ecNumber>
    </recommendedName>
    <alternativeName>
        <fullName evidence="1">Exodeoxyribonuclease VII large subunit</fullName>
        <shortName evidence="1">Exonuclease VII large subunit</shortName>
    </alternativeName>
</protein>
<name>EX7L_SHIF8</name>
<accession>Q0T210</accession>
<gene>
    <name evidence="1" type="primary">xseA</name>
    <name type="ordered locus">SFV_2556</name>
</gene>
<dbReference type="EC" id="3.1.11.6" evidence="1"/>
<dbReference type="EMBL" id="CP000266">
    <property type="protein sequence ID" value="ABF04655.1"/>
    <property type="molecule type" value="Genomic_DNA"/>
</dbReference>
<dbReference type="RefSeq" id="WP_000937942.1">
    <property type="nucleotide sequence ID" value="NC_008258.1"/>
</dbReference>
<dbReference type="SMR" id="Q0T210"/>
<dbReference type="KEGG" id="sfv:SFV_2556"/>
<dbReference type="HOGENOM" id="CLU_023625_3_1_6"/>
<dbReference type="Proteomes" id="UP000000659">
    <property type="component" value="Chromosome"/>
</dbReference>
<dbReference type="GO" id="GO:0005737">
    <property type="term" value="C:cytoplasm"/>
    <property type="evidence" value="ECO:0007669"/>
    <property type="project" value="UniProtKB-SubCell"/>
</dbReference>
<dbReference type="GO" id="GO:0009318">
    <property type="term" value="C:exodeoxyribonuclease VII complex"/>
    <property type="evidence" value="ECO:0007669"/>
    <property type="project" value="InterPro"/>
</dbReference>
<dbReference type="GO" id="GO:0008855">
    <property type="term" value="F:exodeoxyribonuclease VII activity"/>
    <property type="evidence" value="ECO:0007669"/>
    <property type="project" value="UniProtKB-UniRule"/>
</dbReference>
<dbReference type="GO" id="GO:0003676">
    <property type="term" value="F:nucleic acid binding"/>
    <property type="evidence" value="ECO:0007669"/>
    <property type="project" value="InterPro"/>
</dbReference>
<dbReference type="GO" id="GO:0006308">
    <property type="term" value="P:DNA catabolic process"/>
    <property type="evidence" value="ECO:0007669"/>
    <property type="project" value="UniProtKB-UniRule"/>
</dbReference>
<dbReference type="CDD" id="cd04489">
    <property type="entry name" value="ExoVII_LU_OBF"/>
    <property type="match status" value="1"/>
</dbReference>
<dbReference type="HAMAP" id="MF_00378">
    <property type="entry name" value="Exonuc_7_L"/>
    <property type="match status" value="1"/>
</dbReference>
<dbReference type="InterPro" id="IPR003753">
    <property type="entry name" value="Exonuc_VII_L"/>
</dbReference>
<dbReference type="InterPro" id="IPR020579">
    <property type="entry name" value="Exonuc_VII_lsu_C"/>
</dbReference>
<dbReference type="InterPro" id="IPR025824">
    <property type="entry name" value="OB-fold_nuc-bd_dom"/>
</dbReference>
<dbReference type="NCBIfam" id="TIGR00237">
    <property type="entry name" value="xseA"/>
    <property type="match status" value="1"/>
</dbReference>
<dbReference type="PANTHER" id="PTHR30008">
    <property type="entry name" value="EXODEOXYRIBONUCLEASE 7 LARGE SUBUNIT"/>
    <property type="match status" value="1"/>
</dbReference>
<dbReference type="PANTHER" id="PTHR30008:SF0">
    <property type="entry name" value="EXODEOXYRIBONUCLEASE 7 LARGE SUBUNIT"/>
    <property type="match status" value="1"/>
</dbReference>
<dbReference type="Pfam" id="PF02601">
    <property type="entry name" value="Exonuc_VII_L"/>
    <property type="match status" value="1"/>
</dbReference>
<dbReference type="Pfam" id="PF13742">
    <property type="entry name" value="tRNA_anti_2"/>
    <property type="match status" value="1"/>
</dbReference>
<evidence type="ECO:0000255" key="1">
    <source>
        <dbReference type="HAMAP-Rule" id="MF_00378"/>
    </source>
</evidence>
<feature type="chain" id="PRO_0000303819" description="Exodeoxyribonuclease 7 large subunit">
    <location>
        <begin position="1"/>
        <end position="456"/>
    </location>
</feature>
<comment type="function">
    <text evidence="1">Bidirectionally degrades single-stranded DNA into large acid-insoluble oligonucleotides, which are then degraded further into small acid-soluble oligonucleotides.</text>
</comment>
<comment type="catalytic activity">
    <reaction evidence="1">
        <text>Exonucleolytic cleavage in either 5'- to 3'- or 3'- to 5'-direction to yield nucleoside 5'-phosphates.</text>
        <dbReference type="EC" id="3.1.11.6"/>
    </reaction>
</comment>
<comment type="subunit">
    <text evidence="1">Heterooligomer composed of large and small subunits.</text>
</comment>
<comment type="subcellular location">
    <subcellularLocation>
        <location evidence="1">Cytoplasm</location>
    </subcellularLocation>
</comment>
<comment type="similarity">
    <text evidence="1">Belongs to the XseA family.</text>
</comment>
<reference key="1">
    <citation type="journal article" date="2006" name="BMC Genomics">
        <title>Complete genome sequence of Shigella flexneri 5b and comparison with Shigella flexneri 2a.</title>
        <authorList>
            <person name="Nie H."/>
            <person name="Yang F."/>
            <person name="Zhang X."/>
            <person name="Yang J."/>
            <person name="Chen L."/>
            <person name="Wang J."/>
            <person name="Xiong Z."/>
            <person name="Peng J."/>
            <person name="Sun L."/>
            <person name="Dong J."/>
            <person name="Xue Y."/>
            <person name="Xu X."/>
            <person name="Chen S."/>
            <person name="Yao Z."/>
            <person name="Shen Y."/>
            <person name="Jin Q."/>
        </authorList>
    </citation>
    <scope>NUCLEOTIDE SEQUENCE [LARGE SCALE GENOMIC DNA]</scope>
    <source>
        <strain>8401</strain>
    </source>
</reference>
<sequence>MLPSQSPAIFTVSRLNQTVRLLLEHEMGQVWISGEISNFTQPASGHWYFTLKDDTAQVRCAMFRNSNRRVTFRPQHGQQVLVRANITLYEPRGDYQIIVESMQPAGEGLLQQKYEQLKAKLQAEGLFDQQYKKPLPSPAHCVGVITSKTGAALHDILHVLKRRDPSLPVIIYPTSVQGDDAPGQIVRAIELANQRNECDVLIVGRGGGSLEDLWSFNDERVARAIFASRIPVVSAVGHETDVTIADFVADLRAPTPSAAAEVVSRNQQELLRQVQSSRQRLEMAMDYYLANRTRRFTQIHHRLQQQHPQLRLARQQTMLERLQKRMSFALENQLKRAGQQQQRLTQRLNQQNPQPKIHRTQTRIQQLEYRLAEILRAQLSATRERFGNAVTHLEAVSPLSTLARGYSVTTATDGNVLKKVKQVKAGEMLTTRLEDGWIESEVKNIQPVKKSRKKVH</sequence>
<keyword id="KW-0963">Cytoplasm</keyword>
<keyword id="KW-0269">Exonuclease</keyword>
<keyword id="KW-0378">Hydrolase</keyword>
<keyword id="KW-0540">Nuclease</keyword>
<organism>
    <name type="scientific">Shigella flexneri serotype 5b (strain 8401)</name>
    <dbReference type="NCBI Taxonomy" id="373384"/>
    <lineage>
        <taxon>Bacteria</taxon>
        <taxon>Pseudomonadati</taxon>
        <taxon>Pseudomonadota</taxon>
        <taxon>Gammaproteobacteria</taxon>
        <taxon>Enterobacterales</taxon>
        <taxon>Enterobacteriaceae</taxon>
        <taxon>Shigella</taxon>
    </lineage>
</organism>
<proteinExistence type="inferred from homology"/>